<keyword id="KW-0012">Acyltransferase</keyword>
<keyword id="KW-0963">Cytoplasm</keyword>
<keyword id="KW-0408">Iron</keyword>
<keyword id="KW-0479">Metal-binding</keyword>
<keyword id="KW-0808">Transferase</keyword>
<keyword id="KW-0819">tRNA processing</keyword>
<feature type="chain" id="PRO_1000145980" description="tRNA N6-adenosine threonylcarbamoyltransferase">
    <location>
        <begin position="1"/>
        <end position="337"/>
    </location>
</feature>
<feature type="binding site" evidence="1">
    <location>
        <position position="111"/>
    </location>
    <ligand>
        <name>Fe cation</name>
        <dbReference type="ChEBI" id="CHEBI:24875"/>
    </ligand>
</feature>
<feature type="binding site" evidence="1">
    <location>
        <position position="115"/>
    </location>
    <ligand>
        <name>Fe cation</name>
        <dbReference type="ChEBI" id="CHEBI:24875"/>
    </ligand>
</feature>
<feature type="binding site" evidence="1">
    <location>
        <begin position="134"/>
        <end position="138"/>
    </location>
    <ligand>
        <name>substrate</name>
    </ligand>
</feature>
<feature type="binding site" evidence="1">
    <location>
        <position position="167"/>
    </location>
    <ligand>
        <name>substrate</name>
    </ligand>
</feature>
<feature type="binding site" evidence="1">
    <location>
        <position position="180"/>
    </location>
    <ligand>
        <name>substrate</name>
    </ligand>
</feature>
<feature type="binding site" evidence="1">
    <location>
        <position position="272"/>
    </location>
    <ligand>
        <name>substrate</name>
    </ligand>
</feature>
<feature type="binding site" evidence="1">
    <location>
        <position position="300"/>
    </location>
    <ligand>
        <name>Fe cation</name>
        <dbReference type="ChEBI" id="CHEBI:24875"/>
    </ligand>
</feature>
<name>TSAD_ECOSE</name>
<gene>
    <name evidence="1" type="primary">tsaD</name>
    <name type="synonym">gcp</name>
    <name type="ordered locus">ECSE_3345</name>
</gene>
<comment type="function">
    <text evidence="1">Required for the formation of a threonylcarbamoyl group on adenosine at position 37 (t(6)A37) in tRNAs that read codons beginning with adenine. Is involved in the transfer of the threonylcarbamoyl moiety of threonylcarbamoyl-AMP (TC-AMP) to the N6 group of A37, together with TsaE and TsaB. TsaD likely plays a direct catalytic role in this reaction.</text>
</comment>
<comment type="catalytic activity">
    <reaction evidence="1">
        <text>L-threonylcarbamoyladenylate + adenosine(37) in tRNA = N(6)-L-threonylcarbamoyladenosine(37) in tRNA + AMP + H(+)</text>
        <dbReference type="Rhea" id="RHEA:37059"/>
        <dbReference type="Rhea" id="RHEA-COMP:10162"/>
        <dbReference type="Rhea" id="RHEA-COMP:10163"/>
        <dbReference type="ChEBI" id="CHEBI:15378"/>
        <dbReference type="ChEBI" id="CHEBI:73682"/>
        <dbReference type="ChEBI" id="CHEBI:74411"/>
        <dbReference type="ChEBI" id="CHEBI:74418"/>
        <dbReference type="ChEBI" id="CHEBI:456215"/>
        <dbReference type="EC" id="2.3.1.234"/>
    </reaction>
</comment>
<comment type="cofactor">
    <cofactor evidence="1">
        <name>Fe(2+)</name>
        <dbReference type="ChEBI" id="CHEBI:29033"/>
    </cofactor>
    <text evidence="1">Binds 1 Fe(2+) ion per subunit.</text>
</comment>
<comment type="subcellular location">
    <subcellularLocation>
        <location evidence="1">Cytoplasm</location>
    </subcellularLocation>
</comment>
<comment type="similarity">
    <text evidence="1">Belongs to the KAE1 / TsaD family.</text>
</comment>
<reference key="1">
    <citation type="journal article" date="2008" name="DNA Res.">
        <title>Complete genome sequence and comparative analysis of the wild-type commensal Escherichia coli strain SE11 isolated from a healthy adult.</title>
        <authorList>
            <person name="Oshima K."/>
            <person name="Toh H."/>
            <person name="Ogura Y."/>
            <person name="Sasamoto H."/>
            <person name="Morita H."/>
            <person name="Park S.-H."/>
            <person name="Ooka T."/>
            <person name="Iyoda S."/>
            <person name="Taylor T.D."/>
            <person name="Hayashi T."/>
            <person name="Itoh K."/>
            <person name="Hattori M."/>
        </authorList>
    </citation>
    <scope>NUCLEOTIDE SEQUENCE [LARGE SCALE GENOMIC DNA]</scope>
    <source>
        <strain>SE11</strain>
    </source>
</reference>
<sequence>MRVLGIETSCDETGIAIYDDEKGLLANQLYSQVKLHADYGGVVPELASRDHVRKTVPLIQAALKESGLTAKDIDAVAYTAGPGLVGALLVGATVGRSLAFAWNVPAIPVHHMEGHLLAPMLEDNPPEFPFVALLVSGGHTQLISVTGIGQYELLGESIDDAAGEAFDKTAKLLGLDYPGGPLLSKMAAQGTAGRFVFPRPMTDRPGLDFSFSGLKTFAANTIRDNGTDDQTRADIARAFEDAVVDTLMIKCKRALDQTGFKRLVMAGGVSANRTLRAKLAEMMKKRRGEVFYARPEFCTDNGAMIAYAGMVRFKAGATADLGVSVRPRWPLAELPAA</sequence>
<protein>
    <recommendedName>
        <fullName evidence="1">tRNA N6-adenosine threonylcarbamoyltransferase</fullName>
        <ecNumber evidence="1">2.3.1.234</ecNumber>
    </recommendedName>
    <alternativeName>
        <fullName evidence="1">N6-L-threonylcarbamoyladenine synthase</fullName>
        <shortName evidence="1">t(6)A synthase</shortName>
    </alternativeName>
    <alternativeName>
        <fullName evidence="1">t(6)A37 threonylcarbamoyladenosine biosynthesis protein TsaD</fullName>
    </alternativeName>
    <alternativeName>
        <fullName evidence="1">tRNA threonylcarbamoyladenosine biosynthesis protein TsaD</fullName>
    </alternativeName>
</protein>
<proteinExistence type="inferred from homology"/>
<evidence type="ECO:0000255" key="1">
    <source>
        <dbReference type="HAMAP-Rule" id="MF_01445"/>
    </source>
</evidence>
<organism>
    <name type="scientific">Escherichia coli (strain SE11)</name>
    <dbReference type="NCBI Taxonomy" id="409438"/>
    <lineage>
        <taxon>Bacteria</taxon>
        <taxon>Pseudomonadati</taxon>
        <taxon>Pseudomonadota</taxon>
        <taxon>Gammaproteobacteria</taxon>
        <taxon>Enterobacterales</taxon>
        <taxon>Enterobacteriaceae</taxon>
        <taxon>Escherichia</taxon>
    </lineage>
</organism>
<dbReference type="EC" id="2.3.1.234" evidence="1"/>
<dbReference type="EMBL" id="AP009240">
    <property type="protein sequence ID" value="BAG78869.1"/>
    <property type="molecule type" value="Genomic_DNA"/>
</dbReference>
<dbReference type="RefSeq" id="WP_001264365.1">
    <property type="nucleotide sequence ID" value="NC_011415.1"/>
</dbReference>
<dbReference type="SMR" id="B6I436"/>
<dbReference type="GeneID" id="93778929"/>
<dbReference type="KEGG" id="ecy:ECSE_3345"/>
<dbReference type="HOGENOM" id="CLU_023208_0_2_6"/>
<dbReference type="Proteomes" id="UP000008199">
    <property type="component" value="Chromosome"/>
</dbReference>
<dbReference type="GO" id="GO:0005737">
    <property type="term" value="C:cytoplasm"/>
    <property type="evidence" value="ECO:0007669"/>
    <property type="project" value="UniProtKB-SubCell"/>
</dbReference>
<dbReference type="GO" id="GO:0005506">
    <property type="term" value="F:iron ion binding"/>
    <property type="evidence" value="ECO:0007669"/>
    <property type="project" value="UniProtKB-UniRule"/>
</dbReference>
<dbReference type="GO" id="GO:0061711">
    <property type="term" value="F:N(6)-L-threonylcarbamoyladenine synthase activity"/>
    <property type="evidence" value="ECO:0007669"/>
    <property type="project" value="UniProtKB-EC"/>
</dbReference>
<dbReference type="GO" id="GO:0002949">
    <property type="term" value="P:tRNA threonylcarbamoyladenosine modification"/>
    <property type="evidence" value="ECO:0007669"/>
    <property type="project" value="UniProtKB-UniRule"/>
</dbReference>
<dbReference type="CDD" id="cd24097">
    <property type="entry name" value="ASKHA_NBD_TsaD-like"/>
    <property type="match status" value="1"/>
</dbReference>
<dbReference type="FunFam" id="3.30.420.40:FF:000031">
    <property type="entry name" value="tRNA N6-adenosine threonylcarbamoyltransferase"/>
    <property type="match status" value="1"/>
</dbReference>
<dbReference type="Gene3D" id="3.30.420.40">
    <property type="match status" value="2"/>
</dbReference>
<dbReference type="HAMAP" id="MF_01445">
    <property type="entry name" value="TsaD"/>
    <property type="match status" value="1"/>
</dbReference>
<dbReference type="InterPro" id="IPR043129">
    <property type="entry name" value="ATPase_NBD"/>
</dbReference>
<dbReference type="InterPro" id="IPR000905">
    <property type="entry name" value="Gcp-like_dom"/>
</dbReference>
<dbReference type="InterPro" id="IPR017861">
    <property type="entry name" value="KAE1/TsaD"/>
</dbReference>
<dbReference type="InterPro" id="IPR017860">
    <property type="entry name" value="Peptidase_M22_CS"/>
</dbReference>
<dbReference type="InterPro" id="IPR022450">
    <property type="entry name" value="TsaD"/>
</dbReference>
<dbReference type="NCBIfam" id="TIGR00329">
    <property type="entry name" value="gcp_kae1"/>
    <property type="match status" value="1"/>
</dbReference>
<dbReference type="NCBIfam" id="TIGR03723">
    <property type="entry name" value="T6A_TsaD_YgjD"/>
    <property type="match status" value="1"/>
</dbReference>
<dbReference type="PANTHER" id="PTHR11735">
    <property type="entry name" value="TRNA N6-ADENOSINE THREONYLCARBAMOYLTRANSFERASE"/>
    <property type="match status" value="1"/>
</dbReference>
<dbReference type="PANTHER" id="PTHR11735:SF6">
    <property type="entry name" value="TRNA N6-ADENOSINE THREONYLCARBAMOYLTRANSFERASE, MITOCHONDRIAL"/>
    <property type="match status" value="1"/>
</dbReference>
<dbReference type="Pfam" id="PF00814">
    <property type="entry name" value="TsaD"/>
    <property type="match status" value="1"/>
</dbReference>
<dbReference type="PRINTS" id="PR00789">
    <property type="entry name" value="OSIALOPTASE"/>
</dbReference>
<dbReference type="SUPFAM" id="SSF53067">
    <property type="entry name" value="Actin-like ATPase domain"/>
    <property type="match status" value="1"/>
</dbReference>
<dbReference type="PROSITE" id="PS01016">
    <property type="entry name" value="GLYCOPROTEASE"/>
    <property type="match status" value="1"/>
</dbReference>
<accession>B6I436</accession>